<keyword id="KW-0997">Cell inner membrane</keyword>
<keyword id="KW-1003">Cell membrane</keyword>
<keyword id="KW-0472">Membrane</keyword>
<keyword id="KW-0812">Transmembrane</keyword>
<keyword id="KW-1133">Transmembrane helix</keyword>
<gene>
    <name evidence="1" type="primary">frdD</name>
    <name type="ordered locus">VIBHAR_00134</name>
</gene>
<comment type="function">
    <text evidence="1">Anchors the catalytic components of the fumarate reductase complex to the cell membrane, binds quinones.</text>
</comment>
<comment type="subunit">
    <text evidence="1">Part of an enzyme complex containing four subunits: a flavoprotein (FrdA), an iron-sulfur protein (FrdB), and two hydrophobic anchor proteins (FrdC and FrdD).</text>
</comment>
<comment type="subcellular location">
    <subcellularLocation>
        <location evidence="1">Cell inner membrane</location>
        <topology evidence="1">Multi-pass membrane protein</topology>
    </subcellularLocation>
</comment>
<comment type="similarity">
    <text evidence="1">Belongs to the FrdD family.</text>
</comment>
<accession>A7MZ44</accession>
<proteinExistence type="inferred from homology"/>
<name>FRDD_VIBC1</name>
<feature type="chain" id="PRO_1000045563" description="Fumarate reductase subunit D">
    <location>
        <begin position="1"/>
        <end position="125"/>
    </location>
</feature>
<feature type="transmembrane region" description="Helical" evidence="1">
    <location>
        <begin position="30"/>
        <end position="50"/>
    </location>
</feature>
<feature type="transmembrane region" description="Helical" evidence="1">
    <location>
        <begin position="63"/>
        <end position="83"/>
    </location>
</feature>
<feature type="transmembrane region" description="Helical" evidence="1">
    <location>
        <begin position="105"/>
        <end position="125"/>
    </location>
</feature>
<evidence type="ECO:0000255" key="1">
    <source>
        <dbReference type="HAMAP-Rule" id="MF_00709"/>
    </source>
</evidence>
<reference key="1">
    <citation type="submission" date="2007-08" db="EMBL/GenBank/DDBJ databases">
        <authorList>
            <consortium name="The Vibrio harveyi Genome Sequencing Project"/>
            <person name="Bassler B."/>
            <person name="Clifton S.W."/>
            <person name="Fulton L."/>
            <person name="Delehaunty K."/>
            <person name="Fronick C."/>
            <person name="Harrison M."/>
            <person name="Markivic C."/>
            <person name="Fulton R."/>
            <person name="Tin-Wollam A.-M."/>
            <person name="Shah N."/>
            <person name="Pepin K."/>
            <person name="Nash W."/>
            <person name="Thiruvilangam P."/>
            <person name="Bhonagiri V."/>
            <person name="Waters C."/>
            <person name="Tu K.C."/>
            <person name="Irgon J."/>
            <person name="Wilson R.K."/>
        </authorList>
    </citation>
    <scope>NUCLEOTIDE SEQUENCE [LARGE SCALE GENOMIC DNA]</scope>
    <source>
        <strain>ATCC BAA-1116 / BB120</strain>
    </source>
</reference>
<organism>
    <name type="scientific">Vibrio campbellii (strain ATCC BAA-1116)</name>
    <dbReference type="NCBI Taxonomy" id="2902295"/>
    <lineage>
        <taxon>Bacteria</taxon>
        <taxon>Pseudomonadati</taxon>
        <taxon>Pseudomonadota</taxon>
        <taxon>Gammaproteobacteria</taxon>
        <taxon>Vibrionales</taxon>
        <taxon>Vibrionaceae</taxon>
        <taxon>Vibrio</taxon>
    </lineage>
</organism>
<protein>
    <recommendedName>
        <fullName evidence="1">Fumarate reductase subunit D</fullName>
    </recommendedName>
    <alternativeName>
        <fullName evidence="1">Quinol-fumarate reductase subunit D</fullName>
        <shortName evidence="1">QFR subunit D</shortName>
    </alternativeName>
</protein>
<dbReference type="EMBL" id="CP000789">
    <property type="protein sequence ID" value="ABU69182.1"/>
    <property type="molecule type" value="Genomic_DNA"/>
</dbReference>
<dbReference type="RefSeq" id="WP_005425034.1">
    <property type="nucleotide sequence ID" value="NC_022269.1"/>
</dbReference>
<dbReference type="SMR" id="A7MZ44"/>
<dbReference type="GeneID" id="83583604"/>
<dbReference type="KEGG" id="vha:VIBHAR_00134"/>
<dbReference type="PATRIC" id="fig|338187.25.peg.2399"/>
<dbReference type="Proteomes" id="UP000008152">
    <property type="component" value="Chromosome I"/>
</dbReference>
<dbReference type="GO" id="GO:0045283">
    <property type="term" value="C:fumarate reductase complex"/>
    <property type="evidence" value="ECO:0007669"/>
    <property type="project" value="UniProtKB-UniRule"/>
</dbReference>
<dbReference type="GO" id="GO:0005886">
    <property type="term" value="C:plasma membrane"/>
    <property type="evidence" value="ECO:0007669"/>
    <property type="project" value="UniProtKB-SubCell"/>
</dbReference>
<dbReference type="GO" id="GO:0000104">
    <property type="term" value="F:succinate dehydrogenase activity"/>
    <property type="evidence" value="ECO:0007669"/>
    <property type="project" value="UniProtKB-UniRule"/>
</dbReference>
<dbReference type="GO" id="GO:0006106">
    <property type="term" value="P:fumarate metabolic process"/>
    <property type="evidence" value="ECO:0007669"/>
    <property type="project" value="InterPro"/>
</dbReference>
<dbReference type="CDD" id="cd00547">
    <property type="entry name" value="QFR_TypeD_subunitD"/>
    <property type="match status" value="1"/>
</dbReference>
<dbReference type="Gene3D" id="1.20.1300.10">
    <property type="entry name" value="Fumarate reductase/succinate dehydrogenase, transmembrane subunit"/>
    <property type="match status" value="1"/>
</dbReference>
<dbReference type="HAMAP" id="MF_00709">
    <property type="entry name" value="Fumarate_red_D"/>
    <property type="match status" value="1"/>
</dbReference>
<dbReference type="InterPro" id="IPR003418">
    <property type="entry name" value="Fumarate_red_D"/>
</dbReference>
<dbReference type="InterPro" id="IPR034804">
    <property type="entry name" value="SQR/QFR_C/D"/>
</dbReference>
<dbReference type="NCBIfam" id="NF003977">
    <property type="entry name" value="PRK05470.1-1"/>
    <property type="match status" value="1"/>
</dbReference>
<dbReference type="Pfam" id="PF02313">
    <property type="entry name" value="Fumarate_red_D"/>
    <property type="match status" value="1"/>
</dbReference>
<dbReference type="PIRSF" id="PIRSF000179">
    <property type="entry name" value="FrdD"/>
    <property type="match status" value="1"/>
</dbReference>
<dbReference type="SUPFAM" id="SSF81343">
    <property type="entry name" value="Fumarate reductase respiratory complex transmembrane subunits"/>
    <property type="match status" value="1"/>
</dbReference>
<sequence length="125" mass="13644">MKPNYSVNTAPKRSDEPIWWGLFGAGGTWFAMITPITVLVLGILVPLGVIDAEAMSYERVSEFATSIIGALFIIGTLALPMWHAMHRVHHGMHDLKFHTGVVGKIACYAFAGLISALAVVFIFMI</sequence>